<accession>B5EAX0</accession>
<dbReference type="EC" id="2.8.1.8" evidence="1"/>
<dbReference type="EMBL" id="CP001124">
    <property type="protein sequence ID" value="ACH37429.1"/>
    <property type="molecule type" value="Genomic_DNA"/>
</dbReference>
<dbReference type="RefSeq" id="WP_012528837.1">
    <property type="nucleotide sequence ID" value="NC_011146.1"/>
</dbReference>
<dbReference type="SMR" id="B5EAX0"/>
<dbReference type="STRING" id="404380.Gbem_0400"/>
<dbReference type="KEGG" id="gbm:Gbem_0400"/>
<dbReference type="eggNOG" id="COG0320">
    <property type="taxonomic scope" value="Bacteria"/>
</dbReference>
<dbReference type="HOGENOM" id="CLU_033144_2_1_7"/>
<dbReference type="OrthoDB" id="9787898at2"/>
<dbReference type="UniPathway" id="UPA00538">
    <property type="reaction ID" value="UER00593"/>
</dbReference>
<dbReference type="Proteomes" id="UP000008825">
    <property type="component" value="Chromosome"/>
</dbReference>
<dbReference type="GO" id="GO:0005737">
    <property type="term" value="C:cytoplasm"/>
    <property type="evidence" value="ECO:0007669"/>
    <property type="project" value="UniProtKB-SubCell"/>
</dbReference>
<dbReference type="GO" id="GO:0051539">
    <property type="term" value="F:4 iron, 4 sulfur cluster binding"/>
    <property type="evidence" value="ECO:0007669"/>
    <property type="project" value="UniProtKB-UniRule"/>
</dbReference>
<dbReference type="GO" id="GO:0016992">
    <property type="term" value="F:lipoate synthase activity"/>
    <property type="evidence" value="ECO:0007669"/>
    <property type="project" value="UniProtKB-UniRule"/>
</dbReference>
<dbReference type="GO" id="GO:0046872">
    <property type="term" value="F:metal ion binding"/>
    <property type="evidence" value="ECO:0007669"/>
    <property type="project" value="UniProtKB-KW"/>
</dbReference>
<dbReference type="CDD" id="cd01335">
    <property type="entry name" value="Radical_SAM"/>
    <property type="match status" value="1"/>
</dbReference>
<dbReference type="FunFam" id="3.20.20.70:FF:000186">
    <property type="entry name" value="Lipoyl synthase"/>
    <property type="match status" value="1"/>
</dbReference>
<dbReference type="Gene3D" id="3.20.20.70">
    <property type="entry name" value="Aldolase class I"/>
    <property type="match status" value="1"/>
</dbReference>
<dbReference type="HAMAP" id="MF_00206">
    <property type="entry name" value="Lipoyl_synth"/>
    <property type="match status" value="1"/>
</dbReference>
<dbReference type="InterPro" id="IPR013785">
    <property type="entry name" value="Aldolase_TIM"/>
</dbReference>
<dbReference type="InterPro" id="IPR006638">
    <property type="entry name" value="Elp3/MiaA/NifB-like_rSAM"/>
</dbReference>
<dbReference type="InterPro" id="IPR003698">
    <property type="entry name" value="Lipoyl_synth"/>
</dbReference>
<dbReference type="InterPro" id="IPR007197">
    <property type="entry name" value="rSAM"/>
</dbReference>
<dbReference type="NCBIfam" id="TIGR00510">
    <property type="entry name" value="lipA"/>
    <property type="match status" value="1"/>
</dbReference>
<dbReference type="NCBIfam" id="NF004019">
    <property type="entry name" value="PRK05481.1"/>
    <property type="match status" value="1"/>
</dbReference>
<dbReference type="NCBIfam" id="NF009544">
    <property type="entry name" value="PRK12928.1"/>
    <property type="match status" value="1"/>
</dbReference>
<dbReference type="PANTHER" id="PTHR10949">
    <property type="entry name" value="LIPOYL SYNTHASE"/>
    <property type="match status" value="1"/>
</dbReference>
<dbReference type="PANTHER" id="PTHR10949:SF0">
    <property type="entry name" value="LIPOYL SYNTHASE, MITOCHONDRIAL"/>
    <property type="match status" value="1"/>
</dbReference>
<dbReference type="Pfam" id="PF04055">
    <property type="entry name" value="Radical_SAM"/>
    <property type="match status" value="1"/>
</dbReference>
<dbReference type="PIRSF" id="PIRSF005963">
    <property type="entry name" value="Lipoyl_synth"/>
    <property type="match status" value="1"/>
</dbReference>
<dbReference type="SFLD" id="SFLDF00271">
    <property type="entry name" value="lipoyl_synthase"/>
    <property type="match status" value="1"/>
</dbReference>
<dbReference type="SFLD" id="SFLDG01058">
    <property type="entry name" value="lipoyl_synthase_like"/>
    <property type="match status" value="1"/>
</dbReference>
<dbReference type="SMART" id="SM00729">
    <property type="entry name" value="Elp3"/>
    <property type="match status" value="1"/>
</dbReference>
<dbReference type="SUPFAM" id="SSF102114">
    <property type="entry name" value="Radical SAM enzymes"/>
    <property type="match status" value="1"/>
</dbReference>
<dbReference type="PROSITE" id="PS51918">
    <property type="entry name" value="RADICAL_SAM"/>
    <property type="match status" value="1"/>
</dbReference>
<comment type="function">
    <text evidence="1">Catalyzes the radical-mediated insertion of two sulfur atoms into the C-6 and C-8 positions of the octanoyl moiety bound to the lipoyl domains of lipoate-dependent enzymes, thereby converting the octanoylated domains into lipoylated derivatives.</text>
</comment>
<comment type="catalytic activity">
    <reaction evidence="1">
        <text>[[Fe-S] cluster scaffold protein carrying a second [4Fe-4S](2+) cluster] + N(6)-octanoyl-L-lysyl-[protein] + 2 oxidized [2Fe-2S]-[ferredoxin] + 2 S-adenosyl-L-methionine + 4 H(+) = [[Fe-S] cluster scaffold protein] + N(6)-[(R)-dihydrolipoyl]-L-lysyl-[protein] + 4 Fe(3+) + 2 hydrogen sulfide + 2 5'-deoxyadenosine + 2 L-methionine + 2 reduced [2Fe-2S]-[ferredoxin]</text>
        <dbReference type="Rhea" id="RHEA:16585"/>
        <dbReference type="Rhea" id="RHEA-COMP:9928"/>
        <dbReference type="Rhea" id="RHEA-COMP:10000"/>
        <dbReference type="Rhea" id="RHEA-COMP:10001"/>
        <dbReference type="Rhea" id="RHEA-COMP:10475"/>
        <dbReference type="Rhea" id="RHEA-COMP:14568"/>
        <dbReference type="Rhea" id="RHEA-COMP:14569"/>
        <dbReference type="ChEBI" id="CHEBI:15378"/>
        <dbReference type="ChEBI" id="CHEBI:17319"/>
        <dbReference type="ChEBI" id="CHEBI:29034"/>
        <dbReference type="ChEBI" id="CHEBI:29919"/>
        <dbReference type="ChEBI" id="CHEBI:33722"/>
        <dbReference type="ChEBI" id="CHEBI:33737"/>
        <dbReference type="ChEBI" id="CHEBI:33738"/>
        <dbReference type="ChEBI" id="CHEBI:57844"/>
        <dbReference type="ChEBI" id="CHEBI:59789"/>
        <dbReference type="ChEBI" id="CHEBI:78809"/>
        <dbReference type="ChEBI" id="CHEBI:83100"/>
        <dbReference type="EC" id="2.8.1.8"/>
    </reaction>
</comment>
<comment type="cofactor">
    <cofactor evidence="1">
        <name>[4Fe-4S] cluster</name>
        <dbReference type="ChEBI" id="CHEBI:49883"/>
    </cofactor>
    <text evidence="1">Binds 2 [4Fe-4S] clusters per subunit. One cluster is coordinated with 3 cysteines and an exchangeable S-adenosyl-L-methionine.</text>
</comment>
<comment type="pathway">
    <text evidence="1">Protein modification; protein lipoylation via endogenous pathway; protein N(6)-(lipoyl)lysine from octanoyl-[acyl-carrier-protein]: step 2/2.</text>
</comment>
<comment type="subcellular location">
    <subcellularLocation>
        <location evidence="1">Cytoplasm</location>
    </subcellularLocation>
</comment>
<comment type="similarity">
    <text evidence="1">Belongs to the radical SAM superfamily. Lipoyl synthase family.</text>
</comment>
<proteinExistence type="inferred from homology"/>
<feature type="chain" id="PRO_1000099605" description="Lipoyl synthase">
    <location>
        <begin position="1"/>
        <end position="291"/>
    </location>
</feature>
<feature type="domain" description="Radical SAM core" evidence="2">
    <location>
        <begin position="47"/>
        <end position="262"/>
    </location>
</feature>
<feature type="binding site" evidence="1">
    <location>
        <position position="35"/>
    </location>
    <ligand>
        <name>[4Fe-4S] cluster</name>
        <dbReference type="ChEBI" id="CHEBI:49883"/>
        <label>1</label>
    </ligand>
</feature>
<feature type="binding site" evidence="1">
    <location>
        <position position="40"/>
    </location>
    <ligand>
        <name>[4Fe-4S] cluster</name>
        <dbReference type="ChEBI" id="CHEBI:49883"/>
        <label>1</label>
    </ligand>
</feature>
<feature type="binding site" evidence="1">
    <location>
        <position position="46"/>
    </location>
    <ligand>
        <name>[4Fe-4S] cluster</name>
        <dbReference type="ChEBI" id="CHEBI:49883"/>
        <label>1</label>
    </ligand>
</feature>
<feature type="binding site" evidence="1">
    <location>
        <position position="61"/>
    </location>
    <ligand>
        <name>[4Fe-4S] cluster</name>
        <dbReference type="ChEBI" id="CHEBI:49883"/>
        <label>2</label>
        <note>4Fe-4S-S-AdoMet</note>
    </ligand>
</feature>
<feature type="binding site" evidence="1">
    <location>
        <position position="65"/>
    </location>
    <ligand>
        <name>[4Fe-4S] cluster</name>
        <dbReference type="ChEBI" id="CHEBI:49883"/>
        <label>2</label>
        <note>4Fe-4S-S-AdoMet</note>
    </ligand>
</feature>
<feature type="binding site" evidence="1">
    <location>
        <position position="68"/>
    </location>
    <ligand>
        <name>[4Fe-4S] cluster</name>
        <dbReference type="ChEBI" id="CHEBI:49883"/>
        <label>2</label>
        <note>4Fe-4S-S-AdoMet</note>
    </ligand>
</feature>
<feature type="binding site" evidence="1">
    <location>
        <position position="273"/>
    </location>
    <ligand>
        <name>[4Fe-4S] cluster</name>
        <dbReference type="ChEBI" id="CHEBI:49883"/>
        <label>1</label>
    </ligand>
</feature>
<keyword id="KW-0004">4Fe-4S</keyword>
<keyword id="KW-0963">Cytoplasm</keyword>
<keyword id="KW-0408">Iron</keyword>
<keyword id="KW-0411">Iron-sulfur</keyword>
<keyword id="KW-0479">Metal-binding</keyword>
<keyword id="KW-1185">Reference proteome</keyword>
<keyword id="KW-0949">S-adenosyl-L-methionine</keyword>
<keyword id="KW-0808">Transferase</keyword>
<protein>
    <recommendedName>
        <fullName evidence="1">Lipoyl synthase</fullName>
        <ecNumber evidence="1">2.8.1.8</ecNumber>
    </recommendedName>
    <alternativeName>
        <fullName evidence="1">Lip-syn</fullName>
        <shortName evidence="1">LS</shortName>
    </alternativeName>
    <alternativeName>
        <fullName evidence="1">Lipoate synthase</fullName>
    </alternativeName>
    <alternativeName>
        <fullName evidence="1">Lipoic acid synthase</fullName>
    </alternativeName>
    <alternativeName>
        <fullName evidence="1">Sulfur insertion protein LipA</fullName>
    </alternativeName>
</protein>
<reference key="1">
    <citation type="submission" date="2008-07" db="EMBL/GenBank/DDBJ databases">
        <title>Complete sequence of Geobacter bemidjiensis BEM.</title>
        <authorList>
            <consortium name="US DOE Joint Genome Institute"/>
            <person name="Lucas S."/>
            <person name="Copeland A."/>
            <person name="Lapidus A."/>
            <person name="Glavina del Rio T."/>
            <person name="Dalin E."/>
            <person name="Tice H."/>
            <person name="Bruce D."/>
            <person name="Goodwin L."/>
            <person name="Pitluck S."/>
            <person name="Kiss H."/>
            <person name="Brettin T."/>
            <person name="Detter J.C."/>
            <person name="Han C."/>
            <person name="Kuske C.R."/>
            <person name="Schmutz J."/>
            <person name="Larimer F."/>
            <person name="Land M."/>
            <person name="Hauser L."/>
            <person name="Kyrpides N."/>
            <person name="Lykidis A."/>
            <person name="Lovley D."/>
            <person name="Richardson P."/>
        </authorList>
    </citation>
    <scope>NUCLEOTIDE SEQUENCE [LARGE SCALE GENOMIC DNA]</scope>
    <source>
        <strain>ATCC BAA-1014 / DSM 16622 / JCM 12645 / Bem</strain>
    </source>
</reference>
<name>LIPA_CITBB</name>
<evidence type="ECO:0000255" key="1">
    <source>
        <dbReference type="HAMAP-Rule" id="MF_00206"/>
    </source>
</evidence>
<evidence type="ECO:0000255" key="2">
    <source>
        <dbReference type="PROSITE-ProRule" id="PRU01266"/>
    </source>
</evidence>
<gene>
    <name evidence="1" type="primary">lipA</name>
    <name type="ordered locus">Gbem_0400</name>
</gene>
<organism>
    <name type="scientific">Citrifermentans bemidjiense (strain ATCC BAA-1014 / DSM 16622 / JCM 12645 / Bem)</name>
    <name type="common">Geobacter bemidjiensis</name>
    <dbReference type="NCBI Taxonomy" id="404380"/>
    <lineage>
        <taxon>Bacteria</taxon>
        <taxon>Pseudomonadati</taxon>
        <taxon>Thermodesulfobacteriota</taxon>
        <taxon>Desulfuromonadia</taxon>
        <taxon>Geobacterales</taxon>
        <taxon>Geobacteraceae</taxon>
        <taxon>Citrifermentans</taxon>
    </lineage>
</organism>
<sequence>MDPIRKPAWLQKKIIPAAHAEMEGLLKELRLNTVCQQARCPNITECFGKRQATFLILGRICTRLCSFCSVSKETPLPLEPGEAASVAEAVKRLGLSHVVITSPTRDDLPDGGASVYAETVARIRSVSPATKVELLIPDFRGDWAALAAVVESAPDILGHNLETVPRLYSIRSGADYRRSLDLLAQARRMAPGLNTKSGLMLGLGEEEAELFAVMEDLLKAGCGYLSLGQYLAPSRMHHPVQRYVEPELFERYKERALTMGFEHVESAPYVRSSYHAENYLESKFPPPEGEG</sequence>